<accession>Q55G59</accession>
<name>Y9560_DICDI</name>
<gene>
    <name type="ORF">DDB_G0267802</name>
</gene>
<keyword id="KW-1185">Reference proteome</keyword>
<feature type="chain" id="PRO_0000348200" description="Putative uncharacterized protein DDB_G0267802">
    <location>
        <begin position="1"/>
        <end position="51"/>
    </location>
</feature>
<proteinExistence type="predicted"/>
<reference key="1">
    <citation type="journal article" date="2005" name="Nature">
        <title>The genome of the social amoeba Dictyostelium discoideum.</title>
        <authorList>
            <person name="Eichinger L."/>
            <person name="Pachebat J.A."/>
            <person name="Gloeckner G."/>
            <person name="Rajandream M.A."/>
            <person name="Sucgang R."/>
            <person name="Berriman M."/>
            <person name="Song J."/>
            <person name="Olsen R."/>
            <person name="Szafranski K."/>
            <person name="Xu Q."/>
            <person name="Tunggal B."/>
            <person name="Kummerfeld S."/>
            <person name="Madera M."/>
            <person name="Konfortov B.A."/>
            <person name="Rivero F."/>
            <person name="Bankier A.T."/>
            <person name="Lehmann R."/>
            <person name="Hamlin N."/>
            <person name="Davies R."/>
            <person name="Gaudet P."/>
            <person name="Fey P."/>
            <person name="Pilcher K."/>
            <person name="Chen G."/>
            <person name="Saunders D."/>
            <person name="Sodergren E.J."/>
            <person name="Davis P."/>
            <person name="Kerhornou A."/>
            <person name="Nie X."/>
            <person name="Hall N."/>
            <person name="Anjard C."/>
            <person name="Hemphill L."/>
            <person name="Bason N."/>
            <person name="Farbrother P."/>
            <person name="Desany B."/>
            <person name="Just E."/>
            <person name="Morio T."/>
            <person name="Rost R."/>
            <person name="Churcher C.M."/>
            <person name="Cooper J."/>
            <person name="Haydock S."/>
            <person name="van Driessche N."/>
            <person name="Cronin A."/>
            <person name="Goodhead I."/>
            <person name="Muzny D.M."/>
            <person name="Mourier T."/>
            <person name="Pain A."/>
            <person name="Lu M."/>
            <person name="Harper D."/>
            <person name="Lindsay R."/>
            <person name="Hauser H."/>
            <person name="James K.D."/>
            <person name="Quiles M."/>
            <person name="Madan Babu M."/>
            <person name="Saito T."/>
            <person name="Buchrieser C."/>
            <person name="Wardroper A."/>
            <person name="Felder M."/>
            <person name="Thangavelu M."/>
            <person name="Johnson D."/>
            <person name="Knights A."/>
            <person name="Loulseged H."/>
            <person name="Mungall K.L."/>
            <person name="Oliver K."/>
            <person name="Price C."/>
            <person name="Quail M.A."/>
            <person name="Urushihara H."/>
            <person name="Hernandez J."/>
            <person name="Rabbinowitsch E."/>
            <person name="Steffen D."/>
            <person name="Sanders M."/>
            <person name="Ma J."/>
            <person name="Kohara Y."/>
            <person name="Sharp S."/>
            <person name="Simmonds M.N."/>
            <person name="Spiegler S."/>
            <person name="Tivey A."/>
            <person name="Sugano S."/>
            <person name="White B."/>
            <person name="Walker D."/>
            <person name="Woodward J.R."/>
            <person name="Winckler T."/>
            <person name="Tanaka Y."/>
            <person name="Shaulsky G."/>
            <person name="Schleicher M."/>
            <person name="Weinstock G.M."/>
            <person name="Rosenthal A."/>
            <person name="Cox E.C."/>
            <person name="Chisholm R.L."/>
            <person name="Gibbs R.A."/>
            <person name="Loomis W.F."/>
            <person name="Platzer M."/>
            <person name="Kay R.R."/>
            <person name="Williams J.G."/>
            <person name="Dear P.H."/>
            <person name="Noegel A.A."/>
            <person name="Barrell B.G."/>
            <person name="Kuspa A."/>
        </authorList>
    </citation>
    <scope>NUCLEOTIDE SEQUENCE [LARGE SCALE GENOMIC DNA]</scope>
    <source>
        <strain>AX4</strain>
    </source>
</reference>
<sequence>MVLICGNQRKKFALCPKGSLIFFKGGFKYILIWDESKIGKISSELLQFISN</sequence>
<organism>
    <name type="scientific">Dictyostelium discoideum</name>
    <name type="common">Social amoeba</name>
    <dbReference type="NCBI Taxonomy" id="44689"/>
    <lineage>
        <taxon>Eukaryota</taxon>
        <taxon>Amoebozoa</taxon>
        <taxon>Evosea</taxon>
        <taxon>Eumycetozoa</taxon>
        <taxon>Dictyostelia</taxon>
        <taxon>Dictyosteliales</taxon>
        <taxon>Dictyosteliaceae</taxon>
        <taxon>Dictyostelium</taxon>
    </lineage>
</organism>
<dbReference type="EMBL" id="AAFI02000003">
    <property type="protein sequence ID" value="EAL73354.1"/>
    <property type="molecule type" value="Genomic_DNA"/>
</dbReference>
<dbReference type="RefSeq" id="XP_647324.1">
    <property type="nucleotide sequence ID" value="XM_642232.1"/>
</dbReference>
<dbReference type="PaxDb" id="44689-DDB0189560"/>
<dbReference type="EnsemblProtists" id="EAL73354">
    <property type="protein sequence ID" value="EAL73354"/>
    <property type="gene ID" value="DDB_G0267802"/>
</dbReference>
<dbReference type="GeneID" id="8616134"/>
<dbReference type="KEGG" id="ddi:DDB_G0267802"/>
<dbReference type="dictyBase" id="DDB_G0267802"/>
<dbReference type="VEuPathDB" id="AmoebaDB:DDB_G0267802"/>
<dbReference type="HOGENOM" id="CLU_3110385_0_0_1"/>
<dbReference type="InParanoid" id="Q55G59"/>
<dbReference type="PRO" id="PR:Q55G59"/>
<dbReference type="Proteomes" id="UP000002195">
    <property type="component" value="Chromosome 1"/>
</dbReference>
<protein>
    <recommendedName>
        <fullName>Putative uncharacterized protein DDB_G0267802</fullName>
    </recommendedName>
</protein>